<comment type="function">
    <text evidence="1 3">Required for vacuolar biogenesis and for trafficking of hydrolase precursors to the vacuole. Mediates transport at the vacuolar membrane where it may be responsible for tethering transport vesicles on the target membranes. Acts as a component of the HOPS complex that acts during the docking stage of vacuole fusion. HOPS is an effector for the vacuolar Rab GTPase YPT7 and is required for vacuolar SNARE complex assembly. It remains bound to SNARE complexes after vacuole fusion.</text>
</comment>
<comment type="subunit">
    <text evidence="1 3">Component of the HOPS complex which is composed of PEP5, VPS16, PEP3, VPS33, VPS39 and VPS41. HOPS associates with phosphoinositides and the PX domain of VAM7. Interacts with PEP5, PEP7 and VAM7.</text>
</comment>
<comment type="interaction">
    <interactant intactId="EBI-13130">
        <id>P27801</id>
    </interactant>
    <interactant intactId="EBI-6450">
        <id>P12868</id>
        <label>PEP5</label>
    </interactant>
    <organismsDiffer>false</organismsDiffer>
    <experiments>7</experiments>
</comment>
<comment type="interaction">
    <interactant intactId="EBI-13130">
        <id>P27801</id>
    </interactant>
    <interactant intactId="EBI-20395">
        <id>P20795</id>
        <label>VPS33</label>
    </interactant>
    <organismsDiffer>false</organismsDiffer>
    <experiments>9</experiments>
</comment>
<comment type="subcellular location">
    <subcellularLocation>
        <location>Vacuole membrane</location>
        <topology>Peripheral membrane protein</topology>
        <orientation>Cytoplasmic side</orientation>
    </subcellularLocation>
</comment>
<comment type="miscellaneous">
    <text evidence="2">Present with 2020 molecules/cell in log phase SD medium.</text>
</comment>
<comment type="similarity">
    <text evidence="4">Belongs to the VPS18 family.</text>
</comment>
<feature type="chain" id="PRO_0000055993" description="Vacuolar membrane protein PEP3">
    <location>
        <begin position="1"/>
        <end position="918"/>
    </location>
</feature>
<feature type="repeat" description="CHCR">
    <location>
        <begin position="585"/>
        <end position="741"/>
    </location>
</feature>
<feature type="zinc finger region" description="RING-type; atypical">
    <location>
        <begin position="826"/>
        <end position="851"/>
    </location>
</feature>
<feature type="modified residue" description="Phosphoserine" evidence="5 6">
    <location>
        <position position="907"/>
    </location>
</feature>
<feature type="strand" evidence="7">
    <location>
        <begin position="3"/>
        <end position="9"/>
    </location>
</feature>
<feature type="turn" evidence="7">
    <location>
        <begin position="15"/>
        <end position="17"/>
    </location>
</feature>
<feature type="strand" evidence="7">
    <location>
        <begin position="22"/>
        <end position="26"/>
    </location>
</feature>
<feature type="strand" evidence="7">
    <location>
        <begin position="29"/>
        <end position="33"/>
    </location>
</feature>
<feature type="strand" evidence="7">
    <location>
        <begin position="35"/>
        <end position="42"/>
    </location>
</feature>
<feature type="strand" evidence="7">
    <location>
        <begin position="49"/>
        <end position="53"/>
    </location>
</feature>
<feature type="strand" evidence="7">
    <location>
        <begin position="58"/>
        <end position="60"/>
    </location>
</feature>
<feature type="strand" evidence="7">
    <location>
        <begin position="63"/>
        <end position="68"/>
    </location>
</feature>
<feature type="strand" evidence="7">
    <location>
        <begin position="75"/>
        <end position="79"/>
    </location>
</feature>
<feature type="strand" evidence="7">
    <location>
        <begin position="84"/>
        <end position="88"/>
    </location>
</feature>
<feature type="strand" evidence="7">
    <location>
        <begin position="91"/>
        <end position="94"/>
    </location>
</feature>
<feature type="helix" evidence="7">
    <location>
        <begin position="96"/>
        <end position="98"/>
    </location>
</feature>
<feature type="strand" evidence="7">
    <location>
        <begin position="103"/>
        <end position="118"/>
    </location>
</feature>
<feature type="strand" evidence="7">
    <location>
        <begin position="123"/>
        <end position="129"/>
    </location>
</feature>
<feature type="strand" evidence="7">
    <location>
        <begin position="134"/>
        <end position="141"/>
    </location>
</feature>
<feature type="strand" evidence="7">
    <location>
        <begin position="149"/>
        <end position="155"/>
    </location>
</feature>
<feature type="strand" evidence="7">
    <location>
        <begin position="158"/>
        <end position="163"/>
    </location>
</feature>
<feature type="strand" evidence="7">
    <location>
        <begin position="166"/>
        <end position="171"/>
    </location>
</feature>
<feature type="strand" evidence="7">
    <location>
        <begin position="178"/>
        <end position="180"/>
    </location>
</feature>
<feature type="strand" evidence="7">
    <location>
        <begin position="184"/>
        <end position="188"/>
    </location>
</feature>
<feature type="strand" evidence="7">
    <location>
        <begin position="199"/>
        <end position="203"/>
    </location>
</feature>
<feature type="strand" evidence="7">
    <location>
        <begin position="206"/>
        <end position="219"/>
    </location>
</feature>
<feature type="turn" evidence="7">
    <location>
        <begin position="237"/>
        <end position="240"/>
    </location>
</feature>
<feature type="strand" evidence="7">
    <location>
        <begin position="242"/>
        <end position="245"/>
    </location>
</feature>
<feature type="helix" evidence="7">
    <location>
        <begin position="246"/>
        <end position="248"/>
    </location>
</feature>
<feature type="strand" evidence="7">
    <location>
        <begin position="260"/>
        <end position="265"/>
    </location>
</feature>
<feature type="strand" evidence="7">
    <location>
        <begin position="267"/>
        <end position="274"/>
    </location>
</feature>
<feature type="strand" evidence="7">
    <location>
        <begin position="277"/>
        <end position="282"/>
    </location>
</feature>
<feature type="turn" evidence="7">
    <location>
        <begin position="283"/>
        <end position="285"/>
    </location>
</feature>
<feature type="strand" evidence="7">
    <location>
        <begin position="288"/>
        <end position="293"/>
    </location>
</feature>
<feature type="strand" evidence="7">
    <location>
        <begin position="310"/>
        <end position="316"/>
    </location>
</feature>
<feature type="turn" evidence="7">
    <location>
        <begin position="317"/>
        <end position="320"/>
    </location>
</feature>
<feature type="strand" evidence="7">
    <location>
        <begin position="321"/>
        <end position="328"/>
    </location>
</feature>
<feature type="strand" evidence="7">
    <location>
        <begin position="330"/>
        <end position="337"/>
    </location>
</feature>
<feature type="helix" evidence="7">
    <location>
        <begin position="338"/>
        <end position="346"/>
    </location>
</feature>
<dbReference type="EMBL" id="M65144">
    <property type="protein sequence ID" value="AAA34852.1"/>
    <property type="molecule type" value="Genomic_DNA"/>
</dbReference>
<dbReference type="EMBL" id="Z73320">
    <property type="protein sequence ID" value="CAA97720.1"/>
    <property type="molecule type" value="Genomic_DNA"/>
</dbReference>
<dbReference type="EMBL" id="U53879">
    <property type="protein sequence ID" value="AAB82382.1"/>
    <property type="molecule type" value="Genomic_DNA"/>
</dbReference>
<dbReference type="EMBL" id="BK006945">
    <property type="protein sequence ID" value="DAA09459.1"/>
    <property type="molecule type" value="Genomic_DNA"/>
</dbReference>
<dbReference type="PIR" id="A41943">
    <property type="entry name" value="A41943"/>
</dbReference>
<dbReference type="RefSeq" id="NP_013249.1">
    <property type="nucleotide sequence ID" value="NM_001182035.1"/>
</dbReference>
<dbReference type="PDB" id="4UUY">
    <property type="method" value="X-ray"/>
    <property type="resolution" value="2.14 A"/>
    <property type="chains" value="A/B=2-348"/>
</dbReference>
<dbReference type="PDB" id="7ZU0">
    <property type="method" value="EM"/>
    <property type="resolution" value="4.40 A"/>
    <property type="chains" value="C=1-918"/>
</dbReference>
<dbReference type="PDB" id="8QX8">
    <property type="method" value="EM"/>
    <property type="resolution" value="4.60 A"/>
    <property type="chains" value="C=1-918"/>
</dbReference>
<dbReference type="PDBsum" id="4UUY"/>
<dbReference type="PDBsum" id="7ZU0"/>
<dbReference type="PDBsum" id="8QX8"/>
<dbReference type="EMDB" id="EMD-14964"/>
<dbReference type="EMDB" id="EMD-18701"/>
<dbReference type="EMDB" id="EMD-2280"/>
<dbReference type="SMR" id="P27801"/>
<dbReference type="BioGRID" id="31417">
    <property type="interactions" value="95"/>
</dbReference>
<dbReference type="ComplexPortal" id="CPX-1625">
    <property type="entry name" value="HOPS tethering complex"/>
</dbReference>
<dbReference type="ComplexPortal" id="CPX-1626">
    <property type="entry name" value="CORVET tethering complex"/>
</dbReference>
<dbReference type="DIP" id="DIP-5912N"/>
<dbReference type="FunCoup" id="P27801">
    <property type="interactions" value="1008"/>
</dbReference>
<dbReference type="IntAct" id="P27801">
    <property type="interactions" value="28"/>
</dbReference>
<dbReference type="MINT" id="P27801"/>
<dbReference type="STRING" id="4932.YLR148W"/>
<dbReference type="iPTMnet" id="P27801"/>
<dbReference type="PaxDb" id="4932-YLR148W"/>
<dbReference type="PeptideAtlas" id="P27801"/>
<dbReference type="EnsemblFungi" id="YLR148W_mRNA">
    <property type="protein sequence ID" value="YLR148W"/>
    <property type="gene ID" value="YLR148W"/>
</dbReference>
<dbReference type="GeneID" id="850840"/>
<dbReference type="KEGG" id="sce:YLR148W"/>
<dbReference type="AGR" id="SGD:S000004138"/>
<dbReference type="SGD" id="S000004138">
    <property type="gene designation" value="PEP3"/>
</dbReference>
<dbReference type="VEuPathDB" id="FungiDB:YLR148W"/>
<dbReference type="eggNOG" id="KOG2034">
    <property type="taxonomic scope" value="Eukaryota"/>
</dbReference>
<dbReference type="GeneTree" id="ENSGT00940000153635"/>
<dbReference type="HOGENOM" id="CLU_003488_0_0_1"/>
<dbReference type="InParanoid" id="P27801"/>
<dbReference type="OMA" id="KFFVFPC"/>
<dbReference type="OrthoDB" id="1845386at2759"/>
<dbReference type="BioCyc" id="YEAST:G3O-32284-MONOMER"/>
<dbReference type="BioGRID-ORCS" id="850840">
    <property type="hits" value="3 hits in 10 CRISPR screens"/>
</dbReference>
<dbReference type="EvolutionaryTrace" id="P27801"/>
<dbReference type="PRO" id="PR:P27801"/>
<dbReference type="Proteomes" id="UP000002311">
    <property type="component" value="Chromosome XII"/>
</dbReference>
<dbReference type="RNAct" id="P27801">
    <property type="molecule type" value="protein"/>
</dbReference>
<dbReference type="GO" id="GO:0033263">
    <property type="term" value="C:CORVET complex"/>
    <property type="evidence" value="ECO:0000314"/>
    <property type="project" value="SGD"/>
</dbReference>
<dbReference type="GO" id="GO:0005829">
    <property type="term" value="C:cytosol"/>
    <property type="evidence" value="ECO:0007669"/>
    <property type="project" value="GOC"/>
</dbReference>
<dbReference type="GO" id="GO:0031901">
    <property type="term" value="C:early endosome membrane"/>
    <property type="evidence" value="ECO:0000314"/>
    <property type="project" value="ComplexPortal"/>
</dbReference>
<dbReference type="GO" id="GO:0005768">
    <property type="term" value="C:endosome"/>
    <property type="evidence" value="ECO:0000318"/>
    <property type="project" value="GO_Central"/>
</dbReference>
<dbReference type="GO" id="GO:0000329">
    <property type="term" value="C:fungal-type vacuole membrane"/>
    <property type="evidence" value="ECO:0000314"/>
    <property type="project" value="SGD"/>
</dbReference>
<dbReference type="GO" id="GO:0030897">
    <property type="term" value="C:HOPS complex"/>
    <property type="evidence" value="ECO:0000353"/>
    <property type="project" value="ComplexPortal"/>
</dbReference>
<dbReference type="GO" id="GO:0030674">
    <property type="term" value="F:protein-macromolecule adaptor activity"/>
    <property type="evidence" value="ECO:0000315"/>
    <property type="project" value="SGD"/>
</dbReference>
<dbReference type="GO" id="GO:0008270">
    <property type="term" value="F:zinc ion binding"/>
    <property type="evidence" value="ECO:0007669"/>
    <property type="project" value="UniProtKB-KW"/>
</dbReference>
<dbReference type="GO" id="GO:0007032">
    <property type="term" value="P:endosome organization"/>
    <property type="evidence" value="ECO:0000318"/>
    <property type="project" value="GO_Central"/>
</dbReference>
<dbReference type="GO" id="GO:0006895">
    <property type="term" value="P:Golgi to endosome transport"/>
    <property type="evidence" value="ECO:0000316"/>
    <property type="project" value="SGD"/>
</dbReference>
<dbReference type="GO" id="GO:0006886">
    <property type="term" value="P:intracellular protein transport"/>
    <property type="evidence" value="ECO:0007669"/>
    <property type="project" value="InterPro"/>
</dbReference>
<dbReference type="GO" id="GO:0045324">
    <property type="term" value="P:late endosome to vacuole transport"/>
    <property type="evidence" value="ECO:0000316"/>
    <property type="project" value="SGD"/>
</dbReference>
<dbReference type="GO" id="GO:0048284">
    <property type="term" value="P:organelle fusion"/>
    <property type="evidence" value="ECO:0000318"/>
    <property type="project" value="GO_Central"/>
</dbReference>
<dbReference type="GO" id="GO:0035542">
    <property type="term" value="P:regulation of SNARE complex assembly"/>
    <property type="evidence" value="ECO:0000314"/>
    <property type="project" value="SGD"/>
</dbReference>
<dbReference type="GO" id="GO:0032889">
    <property type="term" value="P:regulation of vacuole fusion, non-autophagic"/>
    <property type="evidence" value="ECO:0000314"/>
    <property type="project" value="ComplexPortal"/>
</dbReference>
<dbReference type="GO" id="GO:0042144">
    <property type="term" value="P:vacuole fusion, non-autophagic"/>
    <property type="evidence" value="ECO:0000314"/>
    <property type="project" value="SGD"/>
</dbReference>
<dbReference type="GO" id="GO:0007033">
    <property type="term" value="P:vacuole organization"/>
    <property type="evidence" value="ECO:0000318"/>
    <property type="project" value="GO_Central"/>
</dbReference>
<dbReference type="GO" id="GO:0006904">
    <property type="term" value="P:vesicle docking involved in exocytosis"/>
    <property type="evidence" value="ECO:0000315"/>
    <property type="project" value="SGD"/>
</dbReference>
<dbReference type="GO" id="GO:0099022">
    <property type="term" value="P:vesicle tethering"/>
    <property type="evidence" value="ECO:0000314"/>
    <property type="project" value="ComplexPortal"/>
</dbReference>
<dbReference type="CDD" id="cd16462">
    <property type="entry name" value="RING-H2_Pep3p-like"/>
    <property type="match status" value="1"/>
</dbReference>
<dbReference type="InterPro" id="IPR000547">
    <property type="entry name" value="Clathrin_H-chain/VPS_repeat"/>
</dbReference>
<dbReference type="InterPro" id="IPR007810">
    <property type="entry name" value="Pep3_Vps18"/>
</dbReference>
<dbReference type="PANTHER" id="PTHR23323">
    <property type="entry name" value="VACUOLAR PROTEIN SORTING-ASSOCIATED PROTEIN"/>
    <property type="match status" value="1"/>
</dbReference>
<dbReference type="PANTHER" id="PTHR23323:SF26">
    <property type="entry name" value="VACUOLAR PROTEIN SORTING-ASSOCIATED PROTEIN 18 HOMOLOG"/>
    <property type="match status" value="1"/>
</dbReference>
<dbReference type="Pfam" id="PF05131">
    <property type="entry name" value="Pep3_Vps18"/>
    <property type="match status" value="1"/>
</dbReference>
<dbReference type="SMART" id="SM00299">
    <property type="entry name" value="CLH"/>
    <property type="match status" value="1"/>
</dbReference>
<dbReference type="SUPFAM" id="SSF63829">
    <property type="entry name" value="Calcium-dependent phosphotriesterase"/>
    <property type="match status" value="1"/>
</dbReference>
<dbReference type="SUPFAM" id="SSF57850">
    <property type="entry name" value="RING/U-box"/>
    <property type="match status" value="1"/>
</dbReference>
<dbReference type="PROSITE" id="PS50236">
    <property type="entry name" value="CHCR"/>
    <property type="match status" value="1"/>
</dbReference>
<accession>P27801</accession>
<accession>D6VYE3</accession>
<organism>
    <name type="scientific">Saccharomyces cerevisiae (strain ATCC 204508 / S288c)</name>
    <name type="common">Baker's yeast</name>
    <dbReference type="NCBI Taxonomy" id="559292"/>
    <lineage>
        <taxon>Eukaryota</taxon>
        <taxon>Fungi</taxon>
        <taxon>Dikarya</taxon>
        <taxon>Ascomycota</taxon>
        <taxon>Saccharomycotina</taxon>
        <taxon>Saccharomycetes</taxon>
        <taxon>Saccharomycetales</taxon>
        <taxon>Saccharomycetaceae</taxon>
        <taxon>Saccharomyces</taxon>
    </lineage>
</organism>
<sequence length="918" mass="107398">MIKTRIEEVQLQFLTGNTELTHLKVSNDQLIVTTQRTIYRINLQDPAIVNHFDCPLSKELETIMNVHVSPMGSVILIRTNFGRYMLLKDGEFTQLNKIKNLDLSSLHWINETTFLMGIKKTPKLYRVELTGKDITTKLWYENKKLSGGIDGIAYWEGSLLLTIKDNILYWRDVTNMKFPLVLPDESEQFERLKHHAIKKFDSYNGLFAWVTSNGIVFGDLKEKQMEKDPASNNFGKFLSSSKVLLNFELPDYQNDKDHLIKDIVLTAFHILLLRKNTVTMVSQLNNDVVFHETIPRHQLTGSNTDSNEKFLGLVRDSVKETFWCFSNINVFEIIIENEPNSVWNLLVRDNKFDKALSLKGLTVREIESVKLSKAMYLFHTAKDFHSAAQTLGSMKDLSHFGEIALNFLQIKDYNDLNVILIKQLDNVPWKSTQVVLSSWIIWNFMKQLNDIELKINTTKPASTDEDNLLNWNLNLKEKSNELTKFLESHLEKLDNETVYQIMSKQNRQNELLIFASLINDMKFLLSFWIDQGNWYESLKILLTINNHDLVYKYSLILLLNSPEATVSTWMKIKDLDPNKLIPTILKFFTNWQNNSKLITNISEYPENYSLTYLKWCVREVPKMCNPIVYNSILYMMITDPRNDMILENDIIKFMKSNENKYDLNFQLRLSLKFKKTKTSIFLLTRLNLFEDAIDLALKNNLIDDCKVIVNDEILIEDYKLRKRLWLKIAKHLLLSMKDIDIKQLIRTILNDSNEILTIKDLLPFFNEYTTIANLKEELIKFLENHNMKMNEISEDIINSKNLKVEINTEISKFNEIYRILEPGKSCDECGKFLQIKKFIVFPCGHCFHWNCIIRVILNSNDYNLRQKTENFLKAKSKHNLNDLENIIVEKCGLCSDININKIDQPISIDETELAKWNE</sequence>
<keyword id="KW-0002">3D-structure</keyword>
<keyword id="KW-0472">Membrane</keyword>
<keyword id="KW-0479">Metal-binding</keyword>
<keyword id="KW-0597">Phosphoprotein</keyword>
<keyword id="KW-0653">Protein transport</keyword>
<keyword id="KW-1185">Reference proteome</keyword>
<keyword id="KW-0813">Transport</keyword>
<keyword id="KW-0926">Vacuole</keyword>
<keyword id="KW-0862">Zinc</keyword>
<keyword id="KW-0863">Zinc-finger</keyword>
<protein>
    <recommendedName>
        <fullName>Vacuolar membrane protein PEP3</fullName>
    </recommendedName>
    <alternativeName>
        <fullName>Carboxypeptidase Y-deficient protein 3</fullName>
    </alternativeName>
    <alternativeName>
        <fullName>Vacuolar morphogenesis protein 8</fullName>
    </alternativeName>
    <alternativeName>
        <fullName>Vacuolar protein sorting-associated protein 18</fullName>
    </alternativeName>
    <alternativeName>
        <fullName>Vacuolar protein-targeting protein 18</fullName>
    </alternativeName>
</protein>
<reference key="1">
    <citation type="journal article" date="1991" name="Mol. Cell. Biol.">
        <title>Isolation and characterization of PEP3, a gene required for vacuolar biogenesis in Saccharomyces cerevisiae.</title>
        <authorList>
            <person name="Preston R."/>
            <person name="Manolson M.F."/>
            <person name="Becherer K."/>
            <person name="Weindnhammer E."/>
            <person name="Kirkpatrick D."/>
            <person name="Wright R."/>
            <person name="Jones E.W."/>
        </authorList>
    </citation>
    <scope>NUCLEOTIDE SEQUENCE [GENOMIC DNA]</scope>
</reference>
<reference key="2">
    <citation type="journal article" date="1991" name="Mol. Cell. Biol.">
        <title>A putative zinc finger protein, Saccharomyces cerevisiae Vps18p, affects late Golgi functions required for vacuolar protein sorting and efficient alpha-factor prohormone maturation.</title>
        <authorList>
            <person name="Robinson J.S."/>
            <person name="Graham T.R."/>
            <person name="Emr S.D."/>
        </authorList>
    </citation>
    <scope>NUCLEOTIDE SEQUENCE [GENOMIC DNA]</scope>
</reference>
<reference key="3">
    <citation type="journal article" date="1997" name="Nature">
        <title>The nucleotide sequence of Saccharomyces cerevisiae chromosome XII.</title>
        <authorList>
            <person name="Johnston M."/>
            <person name="Hillier L.W."/>
            <person name="Riles L."/>
            <person name="Albermann K."/>
            <person name="Andre B."/>
            <person name="Ansorge W."/>
            <person name="Benes V."/>
            <person name="Brueckner M."/>
            <person name="Delius H."/>
            <person name="Dubois E."/>
            <person name="Duesterhoeft A."/>
            <person name="Entian K.-D."/>
            <person name="Floeth M."/>
            <person name="Goffeau A."/>
            <person name="Hebling U."/>
            <person name="Heumann K."/>
            <person name="Heuss-Neitzel D."/>
            <person name="Hilbert H."/>
            <person name="Hilger F."/>
            <person name="Kleine K."/>
            <person name="Koetter P."/>
            <person name="Louis E.J."/>
            <person name="Messenguy F."/>
            <person name="Mewes H.-W."/>
            <person name="Miosga T."/>
            <person name="Moestl D."/>
            <person name="Mueller-Auer S."/>
            <person name="Nentwich U."/>
            <person name="Obermaier B."/>
            <person name="Piravandi E."/>
            <person name="Pohl T.M."/>
            <person name="Portetelle D."/>
            <person name="Purnelle B."/>
            <person name="Rechmann S."/>
            <person name="Rieger M."/>
            <person name="Rinke M."/>
            <person name="Rose M."/>
            <person name="Scharfe M."/>
            <person name="Scherens B."/>
            <person name="Scholler P."/>
            <person name="Schwager C."/>
            <person name="Schwarz S."/>
            <person name="Underwood A.P."/>
            <person name="Urrestarazu L.A."/>
            <person name="Vandenbol M."/>
            <person name="Verhasselt P."/>
            <person name="Vierendeels F."/>
            <person name="Voet M."/>
            <person name="Volckaert G."/>
            <person name="Voss H."/>
            <person name="Wambutt R."/>
            <person name="Wedler E."/>
            <person name="Wedler H."/>
            <person name="Zimmermann F.K."/>
            <person name="Zollner A."/>
            <person name="Hani J."/>
            <person name="Hoheisel J.D."/>
        </authorList>
    </citation>
    <scope>NUCLEOTIDE SEQUENCE [LARGE SCALE GENOMIC DNA]</scope>
    <source>
        <strain>ATCC 204508 / S288c</strain>
    </source>
</reference>
<reference key="4">
    <citation type="journal article" date="2014" name="G3 (Bethesda)">
        <title>The reference genome sequence of Saccharomyces cerevisiae: Then and now.</title>
        <authorList>
            <person name="Engel S.R."/>
            <person name="Dietrich F.S."/>
            <person name="Fisk D.G."/>
            <person name="Binkley G."/>
            <person name="Balakrishnan R."/>
            <person name="Costanzo M.C."/>
            <person name="Dwight S.S."/>
            <person name="Hitz B.C."/>
            <person name="Karra K."/>
            <person name="Nash R.S."/>
            <person name="Weng S."/>
            <person name="Wong E.D."/>
            <person name="Lloyd P."/>
            <person name="Skrzypek M.S."/>
            <person name="Miyasato S.R."/>
            <person name="Simison M."/>
            <person name="Cherry J.M."/>
        </authorList>
    </citation>
    <scope>GENOME REANNOTATION</scope>
    <source>
        <strain>ATCC 204508 / S288c</strain>
    </source>
</reference>
<reference key="5">
    <citation type="journal article" date="2000" name="Genetics">
        <title>Pep3p/Pep5p complex: a putative docking factor at multiple steps of vesicular transport to the vacuole of Saccharomyces cerevisiae.</title>
        <authorList>
            <person name="Srivastava A."/>
            <person name="Woolford C.A."/>
            <person name="Jones E.W."/>
        </authorList>
    </citation>
    <scope>FUNCTION</scope>
    <scope>INTERACTION WITH PEP5 AND PEP7</scope>
</reference>
<reference key="6">
    <citation type="journal article" date="2003" name="Nature">
        <title>Global analysis of protein expression in yeast.</title>
        <authorList>
            <person name="Ghaemmaghami S."/>
            <person name="Huh W.-K."/>
            <person name="Bower K."/>
            <person name="Howson R.W."/>
            <person name="Belle A."/>
            <person name="Dephoure N."/>
            <person name="O'Shea E.K."/>
            <person name="Weissman J.S."/>
        </authorList>
    </citation>
    <scope>LEVEL OF PROTEIN EXPRESSION [LARGE SCALE ANALYSIS]</scope>
</reference>
<reference key="7">
    <citation type="journal article" date="2006" name="EMBO J.">
        <title>Purification of active HOPS complex reveals its affinities for phosphoinositides and the SNARE Vam7p.</title>
        <authorList>
            <person name="Stroupe C."/>
            <person name="Collins K.M."/>
            <person name="Fratti R.A."/>
            <person name="Wickner W."/>
        </authorList>
    </citation>
    <scope>IDENTIFICATION IN THE HOPS COMPLEX</scope>
    <scope>FUNCTION OF THE HOPS COMPLEX</scope>
    <scope>INTERACTION WITH VAM7</scope>
</reference>
<reference key="8">
    <citation type="journal article" date="2008" name="Mol. Cell. Proteomics">
        <title>A multidimensional chromatography technology for in-depth phosphoproteome analysis.</title>
        <authorList>
            <person name="Albuquerque C.P."/>
            <person name="Smolka M.B."/>
            <person name="Payne S.H."/>
            <person name="Bafna V."/>
            <person name="Eng J."/>
            <person name="Zhou H."/>
        </authorList>
    </citation>
    <scope>PHOSPHORYLATION [LARGE SCALE ANALYSIS] AT SER-907</scope>
    <scope>IDENTIFICATION BY MASS SPECTROMETRY [LARGE SCALE ANALYSIS]</scope>
</reference>
<reference key="9">
    <citation type="journal article" date="2009" name="Science">
        <title>Global analysis of Cdk1 substrate phosphorylation sites provides insights into evolution.</title>
        <authorList>
            <person name="Holt L.J."/>
            <person name="Tuch B.B."/>
            <person name="Villen J."/>
            <person name="Johnson A.D."/>
            <person name="Gygi S.P."/>
            <person name="Morgan D.O."/>
        </authorList>
    </citation>
    <scope>PHOSPHORYLATION [LARGE SCALE ANALYSIS] AT SER-907</scope>
    <scope>IDENTIFICATION BY MASS SPECTROMETRY [LARGE SCALE ANALYSIS]</scope>
</reference>
<gene>
    <name type="primary">PEP3</name>
    <name type="synonym">VAM8</name>
    <name type="synonym">VPS18</name>
    <name type="synonym">VPT18</name>
    <name type="ordered locus">YLR148W</name>
    <name type="ORF">L9634.2</name>
</gene>
<proteinExistence type="evidence at protein level"/>
<evidence type="ECO:0000269" key="1">
    <source>
    </source>
</evidence>
<evidence type="ECO:0000269" key="2">
    <source>
    </source>
</evidence>
<evidence type="ECO:0000269" key="3">
    <source>
    </source>
</evidence>
<evidence type="ECO:0000305" key="4"/>
<evidence type="ECO:0007744" key="5">
    <source>
    </source>
</evidence>
<evidence type="ECO:0007744" key="6">
    <source>
    </source>
</evidence>
<evidence type="ECO:0007829" key="7">
    <source>
        <dbReference type="PDB" id="4UUY"/>
    </source>
</evidence>
<name>PEP3_YEAST</name>